<comment type="similarity">
    <text evidence="1">Belongs to the UPF0149 family.</text>
</comment>
<gene>
    <name type="ordered locus">XF_2010</name>
</gene>
<reference key="1">
    <citation type="journal article" date="2000" name="Nature">
        <title>The genome sequence of the plant pathogen Xylella fastidiosa.</title>
        <authorList>
            <person name="Simpson A.J.G."/>
            <person name="Reinach F.C."/>
            <person name="Arruda P."/>
            <person name="Abreu F.A."/>
            <person name="Acencio M."/>
            <person name="Alvarenga R."/>
            <person name="Alves L.M.C."/>
            <person name="Araya J.E."/>
            <person name="Baia G.S."/>
            <person name="Baptista C.S."/>
            <person name="Barros M.H."/>
            <person name="Bonaccorsi E.D."/>
            <person name="Bordin S."/>
            <person name="Bove J.M."/>
            <person name="Briones M.R.S."/>
            <person name="Bueno M.R.P."/>
            <person name="Camargo A.A."/>
            <person name="Camargo L.E.A."/>
            <person name="Carraro D.M."/>
            <person name="Carrer H."/>
            <person name="Colauto N.B."/>
            <person name="Colombo C."/>
            <person name="Costa F.F."/>
            <person name="Costa M.C.R."/>
            <person name="Costa-Neto C.M."/>
            <person name="Coutinho L.L."/>
            <person name="Cristofani M."/>
            <person name="Dias-Neto E."/>
            <person name="Docena C."/>
            <person name="El-Dorry H."/>
            <person name="Facincani A.P."/>
            <person name="Ferreira A.J.S."/>
            <person name="Ferreira V.C.A."/>
            <person name="Ferro J.A."/>
            <person name="Fraga J.S."/>
            <person name="Franca S.C."/>
            <person name="Franco M.C."/>
            <person name="Frohme M."/>
            <person name="Furlan L.R."/>
            <person name="Garnier M."/>
            <person name="Goldman G.H."/>
            <person name="Goldman M.H.S."/>
            <person name="Gomes S.L."/>
            <person name="Gruber A."/>
            <person name="Ho P.L."/>
            <person name="Hoheisel J.D."/>
            <person name="Junqueira M.L."/>
            <person name="Kemper E.L."/>
            <person name="Kitajima J.P."/>
            <person name="Krieger J.E."/>
            <person name="Kuramae E.E."/>
            <person name="Laigret F."/>
            <person name="Lambais M.R."/>
            <person name="Leite L.C.C."/>
            <person name="Lemos E.G.M."/>
            <person name="Lemos M.V.F."/>
            <person name="Lopes S.A."/>
            <person name="Lopes C.R."/>
            <person name="Machado J.A."/>
            <person name="Machado M.A."/>
            <person name="Madeira A.M.B.N."/>
            <person name="Madeira H.M.F."/>
            <person name="Marino C.L."/>
            <person name="Marques M.V."/>
            <person name="Martins E.A.L."/>
            <person name="Martins E.M.F."/>
            <person name="Matsukuma A.Y."/>
            <person name="Menck C.F.M."/>
            <person name="Miracca E.C."/>
            <person name="Miyaki C.Y."/>
            <person name="Monteiro-Vitorello C.B."/>
            <person name="Moon D.H."/>
            <person name="Nagai M.A."/>
            <person name="Nascimento A.L.T.O."/>
            <person name="Netto L.E.S."/>
            <person name="Nhani A. Jr."/>
            <person name="Nobrega F.G."/>
            <person name="Nunes L.R."/>
            <person name="Oliveira M.A."/>
            <person name="de Oliveira M.C."/>
            <person name="de Oliveira R.C."/>
            <person name="Palmieri D.A."/>
            <person name="Paris A."/>
            <person name="Peixoto B.R."/>
            <person name="Pereira G.A.G."/>
            <person name="Pereira H.A. Jr."/>
            <person name="Pesquero J.B."/>
            <person name="Quaggio R.B."/>
            <person name="Roberto P.G."/>
            <person name="Rodrigues V."/>
            <person name="de Rosa A.J.M."/>
            <person name="de Rosa V.E. Jr."/>
            <person name="de Sa R.G."/>
            <person name="Santelli R.V."/>
            <person name="Sawasaki H.E."/>
            <person name="da Silva A.C.R."/>
            <person name="da Silva A.M."/>
            <person name="da Silva F.R."/>
            <person name="Silva W.A. Jr."/>
            <person name="da Silveira J.F."/>
            <person name="Silvestri M.L.Z."/>
            <person name="Siqueira W.J."/>
            <person name="de Souza A.A."/>
            <person name="de Souza A.P."/>
            <person name="Terenzi M.F."/>
            <person name="Truffi D."/>
            <person name="Tsai S.M."/>
            <person name="Tsuhako M.H."/>
            <person name="Vallada H."/>
            <person name="Van Sluys M.A."/>
            <person name="Verjovski-Almeida S."/>
            <person name="Vettore A.L."/>
            <person name="Zago M.A."/>
            <person name="Zatz M."/>
            <person name="Meidanis J."/>
            <person name="Setubal J.C."/>
        </authorList>
    </citation>
    <scope>NUCLEOTIDE SEQUENCE [LARGE SCALE GENOMIC DNA]</scope>
    <source>
        <strain>9a5c</strain>
    </source>
</reference>
<proteinExistence type="inferred from homology"/>
<feature type="chain" id="PRO_0000207576" description="UPF0149 protein XF_2010">
    <location>
        <begin position="1"/>
        <end position="185"/>
    </location>
</feature>
<sequence length="185" mass="19585">MESPMHLPEVIAVQQESQQMGLSVTAPELHGSLSGLLAGGGGNGPDWLAMILADAEVAAPPKGSVLERLYQATASQLEDPDFAFQLLLADDGATLAARADALFEWCRAFLGGFGLAAHSRSVLSAEGDEILRDLAKLAQASVDDFDMNEEEEDGSLEEIEEFVRVAVLLLHGDCLIGPCAPQPLN</sequence>
<accession>Q9PBX5</accession>
<organism>
    <name type="scientific">Xylella fastidiosa (strain 9a5c)</name>
    <dbReference type="NCBI Taxonomy" id="160492"/>
    <lineage>
        <taxon>Bacteria</taxon>
        <taxon>Pseudomonadati</taxon>
        <taxon>Pseudomonadota</taxon>
        <taxon>Gammaproteobacteria</taxon>
        <taxon>Lysobacterales</taxon>
        <taxon>Lysobacteraceae</taxon>
        <taxon>Xylella</taxon>
    </lineage>
</organism>
<evidence type="ECO:0000305" key="1"/>
<dbReference type="EMBL" id="AE003849">
    <property type="protein sequence ID" value="AAF84812.1"/>
    <property type="molecule type" value="Genomic_DNA"/>
</dbReference>
<dbReference type="PIR" id="G82609">
    <property type="entry name" value="G82609"/>
</dbReference>
<dbReference type="SMR" id="Q9PBX5"/>
<dbReference type="STRING" id="160492.XF_2010"/>
<dbReference type="KEGG" id="xfa:XF_2010"/>
<dbReference type="eggNOG" id="COG3079">
    <property type="taxonomic scope" value="Bacteria"/>
</dbReference>
<dbReference type="HOGENOM" id="CLU_085336_0_0_6"/>
<dbReference type="Proteomes" id="UP000000812">
    <property type="component" value="Chromosome"/>
</dbReference>
<dbReference type="GO" id="GO:0005829">
    <property type="term" value="C:cytosol"/>
    <property type="evidence" value="ECO:0007669"/>
    <property type="project" value="TreeGrafter"/>
</dbReference>
<dbReference type="Gene3D" id="1.20.120.740">
    <property type="entry name" value="YgfB uncharacterised protein family UPF0149, PF03695"/>
    <property type="match status" value="1"/>
</dbReference>
<dbReference type="HAMAP" id="MF_00346">
    <property type="entry name" value="UPF0149"/>
    <property type="match status" value="1"/>
</dbReference>
<dbReference type="InterPro" id="IPR011978">
    <property type="entry name" value="YgfB-like"/>
</dbReference>
<dbReference type="InterPro" id="IPR036255">
    <property type="entry name" value="YgfB-like_sf"/>
</dbReference>
<dbReference type="NCBIfam" id="NF003405">
    <property type="entry name" value="PRK04758.1"/>
    <property type="match status" value="1"/>
</dbReference>
<dbReference type="NCBIfam" id="TIGR02292">
    <property type="entry name" value="ygfB_yecA"/>
    <property type="match status" value="1"/>
</dbReference>
<dbReference type="PANTHER" id="PTHR37528">
    <property type="entry name" value="UPF0149 PROTEIN YGFB"/>
    <property type="match status" value="1"/>
</dbReference>
<dbReference type="PANTHER" id="PTHR37528:SF1">
    <property type="entry name" value="UPF0149 PROTEIN YGFB"/>
    <property type="match status" value="1"/>
</dbReference>
<dbReference type="Pfam" id="PF03695">
    <property type="entry name" value="UPF0149"/>
    <property type="match status" value="1"/>
</dbReference>
<dbReference type="SUPFAM" id="SSF101327">
    <property type="entry name" value="YgfB-like"/>
    <property type="match status" value="1"/>
</dbReference>
<protein>
    <recommendedName>
        <fullName>UPF0149 protein XF_2010</fullName>
    </recommendedName>
</protein>
<name>Y2010_XYLFA</name>